<accession>Q797E6</accession>
<accession>O05499</accession>
<comment type="function">
    <text evidence="1 2 3 4">Plays an essential role in iron intracellular trafficking to iron cofactor biogenesis systems including iron-sulfur cluster (Fe-S) or heme assembly (PubMed:21744456, PubMed:25826316). Promotes the biosynthesis of iron-sulfur clusters by delivering Fe to the complex composed of the cysteine desulfurase SufS and the zinc-dependent sulfurtransferase SufU (PubMed:27382962). Also plays a critical role in coproporphyrin-dependent heme b biogenesis and thus provides an essential function for the bacterial global metabolism.</text>
</comment>
<comment type="cofactor">
    <cofactor evidence="1 2">
        <name>Fe(2+)</name>
        <dbReference type="ChEBI" id="CHEBI:29033"/>
    </cofactor>
    <text evidence="1 2">Binds 1.0 Fe(2+) (PubMed:20087498) to 1.5 to 3.2 Fe(2+) per monomer (PubMed:21744456).</text>
</comment>
<comment type="subunit">
    <text evidence="1 3 4">Homodimer, upon Fe(2+) binding (PubMed:20087498). Interacts with the SufS/SufU complex (PubMed:27382962). Interacts with CpfC (PubMed:25826316).</text>
</comment>
<comment type="subcellular location">
    <subcellularLocation>
        <location evidence="2">Cytoplasm</location>
    </subcellularLocation>
</comment>
<comment type="disruption phenotype">
    <text evidence="2">Reduced growth in rich medium, unable to grow in minimal medium. Reduced activity of Fe-S-dependent aconitase (citB). Reactive oxygen species are drastically reduced. No bacillibactin (BB), an endogenous siderophore, produced. 20% higher intracellular iron concentrations.</text>
</comment>
<comment type="sequence caution" evidence="5">
    <conflict type="erroneous initiation">
        <sequence resource="EMBL-CDS" id="BAA19699"/>
    </conflict>
    <text>Extended N-terminus.</text>
</comment>
<name>FRA_BACSU</name>
<evidence type="ECO:0000269" key="1">
    <source>
    </source>
</evidence>
<evidence type="ECO:0000269" key="2">
    <source>
    </source>
</evidence>
<evidence type="ECO:0000269" key="3">
    <source>
    </source>
</evidence>
<evidence type="ECO:0000269" key="4">
    <source>
    </source>
</evidence>
<evidence type="ECO:0000305" key="5"/>
<evidence type="ECO:0007829" key="6">
    <source>
        <dbReference type="PDB" id="2OC6"/>
    </source>
</evidence>
<gene>
    <name type="primary">fra</name>
    <name type="synonym">ydhG</name>
    <name type="ordered locus">BSU05750</name>
</gene>
<organism>
    <name type="scientific">Bacillus subtilis (strain 168)</name>
    <dbReference type="NCBI Taxonomy" id="224308"/>
    <lineage>
        <taxon>Bacteria</taxon>
        <taxon>Bacillati</taxon>
        <taxon>Bacillota</taxon>
        <taxon>Bacilli</taxon>
        <taxon>Bacillales</taxon>
        <taxon>Bacillaceae</taxon>
        <taxon>Bacillus</taxon>
    </lineage>
</organism>
<proteinExistence type="evidence at protein level"/>
<protein>
    <recommendedName>
        <fullName>Intracellular iron chaperone frataxin</fullName>
    </recommendedName>
    <alternativeName>
        <fullName>Fra</fullName>
    </alternativeName>
    <alternativeName>
        <fullName>Iron channeling protein frataxin</fullName>
    </alternativeName>
</protein>
<dbReference type="EMBL" id="D88802">
    <property type="protein sequence ID" value="BAA19699.1"/>
    <property type="status" value="ALT_INIT"/>
    <property type="molecule type" value="Genomic_DNA"/>
</dbReference>
<dbReference type="EMBL" id="AL009126">
    <property type="protein sequence ID" value="CAB12394.1"/>
    <property type="molecule type" value="Genomic_DNA"/>
</dbReference>
<dbReference type="PIR" id="C69784">
    <property type="entry name" value="C69784"/>
</dbReference>
<dbReference type="RefSeq" id="NP_388456.1">
    <property type="nucleotide sequence ID" value="NC_000964.3"/>
</dbReference>
<dbReference type="RefSeq" id="WP_003244145.1">
    <property type="nucleotide sequence ID" value="NZ_OZ025638.1"/>
</dbReference>
<dbReference type="PDB" id="2OC6">
    <property type="method" value="X-ray"/>
    <property type="resolution" value="1.75 A"/>
    <property type="chains" value="A/B=1-123"/>
</dbReference>
<dbReference type="PDBsum" id="2OC6"/>
<dbReference type="SMR" id="Q797E6"/>
<dbReference type="FunCoup" id="Q797E6">
    <property type="interactions" value="66"/>
</dbReference>
<dbReference type="STRING" id="224308.BSU05750"/>
<dbReference type="PaxDb" id="224308-BSU05750"/>
<dbReference type="EnsemblBacteria" id="CAB12394">
    <property type="protein sequence ID" value="CAB12394"/>
    <property type="gene ID" value="BSU_05750"/>
</dbReference>
<dbReference type="GeneID" id="938031"/>
<dbReference type="KEGG" id="bsu:BSU05750"/>
<dbReference type="PATRIC" id="fig|224308.179.peg.618"/>
<dbReference type="eggNOG" id="COG5646">
    <property type="taxonomic scope" value="Bacteria"/>
</dbReference>
<dbReference type="InParanoid" id="Q797E6"/>
<dbReference type="OrthoDB" id="384795at2"/>
<dbReference type="PhylomeDB" id="Q797E6"/>
<dbReference type="BioCyc" id="BSUB:BSU05750-MONOMER"/>
<dbReference type="EvolutionaryTrace" id="Q797E6"/>
<dbReference type="Proteomes" id="UP000001570">
    <property type="component" value="Chromosome"/>
</dbReference>
<dbReference type="GO" id="GO:0005737">
    <property type="term" value="C:cytoplasm"/>
    <property type="evidence" value="ECO:0007669"/>
    <property type="project" value="UniProtKB-SubCell"/>
</dbReference>
<dbReference type="GO" id="GO:0046872">
    <property type="term" value="F:metal ion binding"/>
    <property type="evidence" value="ECO:0007669"/>
    <property type="project" value="UniProtKB-KW"/>
</dbReference>
<dbReference type="GO" id="GO:0006826">
    <property type="term" value="P:iron ion transport"/>
    <property type="evidence" value="ECO:0007669"/>
    <property type="project" value="UniProtKB-KW"/>
</dbReference>
<dbReference type="Gene3D" id="3.90.1150.200">
    <property type="match status" value="1"/>
</dbReference>
<dbReference type="InterPro" id="IPR014922">
    <property type="entry name" value="YdhG-like"/>
</dbReference>
<dbReference type="Pfam" id="PF08818">
    <property type="entry name" value="DUF1801"/>
    <property type="match status" value="1"/>
</dbReference>
<dbReference type="SUPFAM" id="SSF159888">
    <property type="entry name" value="YdhG-like"/>
    <property type="match status" value="1"/>
</dbReference>
<keyword id="KW-0002">3D-structure</keyword>
<keyword id="KW-0963">Cytoplasm</keyword>
<keyword id="KW-0406">Ion transport</keyword>
<keyword id="KW-0408">Iron</keyword>
<keyword id="KW-0410">Iron transport</keyword>
<keyword id="KW-0479">Metal-binding</keyword>
<keyword id="KW-1185">Reference proteome</keyword>
<keyword id="KW-0813">Transport</keyword>
<reference key="1">
    <citation type="journal article" date="1997" name="Microbiology">
        <title>Nucleotide sequence and analysis of the phoB-rrnE-groESL region of the Bacillus subtilis chromosome.</title>
        <authorList>
            <person name="Sadaie Y."/>
            <person name="Yata K."/>
            <person name="Fujita M."/>
            <person name="Sagai H."/>
            <person name="Itaya M."/>
            <person name="Kasahara Y."/>
            <person name="Ogasawara N."/>
        </authorList>
    </citation>
    <scope>NUCLEOTIDE SEQUENCE [GENOMIC DNA]</scope>
    <source>
        <strain>168 / JH642</strain>
    </source>
</reference>
<reference key="2">
    <citation type="journal article" date="1997" name="Nature">
        <title>The complete genome sequence of the Gram-positive bacterium Bacillus subtilis.</title>
        <authorList>
            <person name="Kunst F."/>
            <person name="Ogasawara N."/>
            <person name="Moszer I."/>
            <person name="Albertini A.M."/>
            <person name="Alloni G."/>
            <person name="Azevedo V."/>
            <person name="Bertero M.G."/>
            <person name="Bessieres P."/>
            <person name="Bolotin A."/>
            <person name="Borchert S."/>
            <person name="Borriss R."/>
            <person name="Boursier L."/>
            <person name="Brans A."/>
            <person name="Braun M."/>
            <person name="Brignell S.C."/>
            <person name="Bron S."/>
            <person name="Brouillet S."/>
            <person name="Bruschi C.V."/>
            <person name="Caldwell B."/>
            <person name="Capuano V."/>
            <person name="Carter N.M."/>
            <person name="Choi S.-K."/>
            <person name="Codani J.-J."/>
            <person name="Connerton I.F."/>
            <person name="Cummings N.J."/>
            <person name="Daniel R.A."/>
            <person name="Denizot F."/>
            <person name="Devine K.M."/>
            <person name="Duesterhoeft A."/>
            <person name="Ehrlich S.D."/>
            <person name="Emmerson P.T."/>
            <person name="Entian K.-D."/>
            <person name="Errington J."/>
            <person name="Fabret C."/>
            <person name="Ferrari E."/>
            <person name="Foulger D."/>
            <person name="Fritz C."/>
            <person name="Fujita M."/>
            <person name="Fujita Y."/>
            <person name="Fuma S."/>
            <person name="Galizzi A."/>
            <person name="Galleron N."/>
            <person name="Ghim S.-Y."/>
            <person name="Glaser P."/>
            <person name="Goffeau A."/>
            <person name="Golightly E.J."/>
            <person name="Grandi G."/>
            <person name="Guiseppi G."/>
            <person name="Guy B.J."/>
            <person name="Haga K."/>
            <person name="Haiech J."/>
            <person name="Harwood C.R."/>
            <person name="Henaut A."/>
            <person name="Hilbert H."/>
            <person name="Holsappel S."/>
            <person name="Hosono S."/>
            <person name="Hullo M.-F."/>
            <person name="Itaya M."/>
            <person name="Jones L.-M."/>
            <person name="Joris B."/>
            <person name="Karamata D."/>
            <person name="Kasahara Y."/>
            <person name="Klaerr-Blanchard M."/>
            <person name="Klein C."/>
            <person name="Kobayashi Y."/>
            <person name="Koetter P."/>
            <person name="Koningstein G."/>
            <person name="Krogh S."/>
            <person name="Kumano M."/>
            <person name="Kurita K."/>
            <person name="Lapidus A."/>
            <person name="Lardinois S."/>
            <person name="Lauber J."/>
            <person name="Lazarevic V."/>
            <person name="Lee S.-M."/>
            <person name="Levine A."/>
            <person name="Liu H."/>
            <person name="Masuda S."/>
            <person name="Mauel C."/>
            <person name="Medigue C."/>
            <person name="Medina N."/>
            <person name="Mellado R.P."/>
            <person name="Mizuno M."/>
            <person name="Moestl D."/>
            <person name="Nakai S."/>
            <person name="Noback M."/>
            <person name="Noone D."/>
            <person name="O'Reilly M."/>
            <person name="Ogawa K."/>
            <person name="Ogiwara A."/>
            <person name="Oudega B."/>
            <person name="Park S.-H."/>
            <person name="Parro V."/>
            <person name="Pohl T.M."/>
            <person name="Portetelle D."/>
            <person name="Porwollik S."/>
            <person name="Prescott A.M."/>
            <person name="Presecan E."/>
            <person name="Pujic P."/>
            <person name="Purnelle B."/>
            <person name="Rapoport G."/>
            <person name="Rey M."/>
            <person name="Reynolds S."/>
            <person name="Rieger M."/>
            <person name="Rivolta C."/>
            <person name="Rocha E."/>
            <person name="Roche B."/>
            <person name="Rose M."/>
            <person name="Sadaie Y."/>
            <person name="Sato T."/>
            <person name="Scanlan E."/>
            <person name="Schleich S."/>
            <person name="Schroeter R."/>
            <person name="Scoffone F."/>
            <person name="Sekiguchi J."/>
            <person name="Sekowska A."/>
            <person name="Seror S.J."/>
            <person name="Serror P."/>
            <person name="Shin B.-S."/>
            <person name="Soldo B."/>
            <person name="Sorokin A."/>
            <person name="Tacconi E."/>
            <person name="Takagi T."/>
            <person name="Takahashi H."/>
            <person name="Takemaru K."/>
            <person name="Takeuchi M."/>
            <person name="Tamakoshi A."/>
            <person name="Tanaka T."/>
            <person name="Terpstra P."/>
            <person name="Tognoni A."/>
            <person name="Tosato V."/>
            <person name="Uchiyama S."/>
            <person name="Vandenbol M."/>
            <person name="Vannier F."/>
            <person name="Vassarotti A."/>
            <person name="Viari A."/>
            <person name="Wambutt R."/>
            <person name="Wedler E."/>
            <person name="Wedler H."/>
            <person name="Weitzenegger T."/>
            <person name="Winters P."/>
            <person name="Wipat A."/>
            <person name="Yamamoto H."/>
            <person name="Yamane K."/>
            <person name="Yasumoto K."/>
            <person name="Yata K."/>
            <person name="Yoshida K."/>
            <person name="Yoshikawa H.-F."/>
            <person name="Zumstein E."/>
            <person name="Yoshikawa H."/>
            <person name="Danchin A."/>
        </authorList>
    </citation>
    <scope>NUCLEOTIDE SEQUENCE [LARGE SCALE GENOMIC DNA]</scope>
    <source>
        <strain>168</strain>
    </source>
</reference>
<reference key="3">
    <citation type="journal article" date="2010" name="Chem. Commun. (Camb.)">
        <title>A structural and functional homolog supports a general role for frataxin in cellular iron chemistry.</title>
        <authorList>
            <person name="Qi W."/>
            <person name="Cowan J.A."/>
        </authorList>
    </citation>
    <scope>FUNCTION</scope>
    <scope>SUBUNIT</scope>
    <scope>IRON-BINDING</scope>
    <source>
        <strain>168 / ATCC 23857D</strain>
    </source>
</reference>
<reference key="4">
    <citation type="journal article" date="2011" name="ChemBioChem">
        <title>The frataxin homologue Fra plays a key role in intracellular iron channeling in Bacillus subtilis.</title>
        <authorList>
            <person name="Albrecht A.G."/>
            <person name="Landmann H."/>
            <person name="Nette D."/>
            <person name="Burghaus O."/>
            <person name="Peuckert F."/>
            <person name="Seubert A."/>
            <person name="Miethke M."/>
            <person name="Marahiel M.A."/>
        </authorList>
    </citation>
    <scope>FUNCTION</scope>
    <scope>IRON-BINDING</scope>
    <scope>COFACTOR</scope>
    <scope>SUBCELLULAR LOCATION</scope>
    <scope>IDENTIFICATION BY MASS SPECTROMETRY</scope>
    <scope>DISRUPTION PHENOTYPE</scope>
    <source>
        <strain>ATCC 21332 / IAM 1213</strain>
    </source>
</reference>
<reference key="5">
    <citation type="journal article" date="2015" name="PLoS ONE">
        <title>Molecular insights into frataxin-mediated iron supply for heme biosynthesis in Bacillus subtilis.</title>
        <authorList>
            <person name="Mielcarek A."/>
            <person name="Blauenburg B."/>
            <person name="Miethke M."/>
            <person name="Marahiel M.A."/>
        </authorList>
    </citation>
    <scope>FUNCTION</scope>
    <scope>INTERACTION WITH CPFC</scope>
    <scope>DISRUPTION PHENOTYPE</scope>
    <source>
        <strain>168</strain>
    </source>
</reference>
<reference key="6">
    <citation type="journal article" date="2016" name="PLoS ONE">
        <title>Crystal Structure of Bacillus subtilis Cysteine Desulfurase SufS and Its Dynamic Interaction with Frataxin and Scaffold Protein SufU.</title>
        <authorList>
            <person name="Blauenburg B."/>
            <person name="Mielcarek A."/>
            <person name="Altegoer F."/>
            <person name="Fage C.D."/>
            <person name="Linne U."/>
            <person name="Bange G."/>
            <person name="Marahiel M.A."/>
        </authorList>
    </citation>
    <scope>FUNCTION</scope>
    <scope>INTERACTION WITH SUFU AND SUFS</scope>
    <source>
        <strain>168</strain>
    </source>
</reference>
<reference key="7">
    <citation type="submission" date="2009-02" db="PDB data bank">
        <title>Crystal structure of hypothetical protein (NP_388456.1) from Bacillus subtilis at 1.75 A resolution.</title>
        <authorList>
            <consortium name="Joint center for structural genomics (JCSG)"/>
        </authorList>
    </citation>
    <scope>X-RAY CRYSTALLOGRAPHY (1.75 ANGSTROMS)</scope>
</reference>
<sequence length="123" mass="14418">MDVFSEYLAGIADPFHRERTEEVLTWIKNKYPNLHTEIKWNQPMFTDHGTFIIGFSVSKKHLAVAPEKVTIAHVEDDIVKAGYDYTEQLIRIPWNGPVDYTLLEKMIEFNILDKADCSTFWRK</sequence>
<feature type="chain" id="PRO_0000386478" description="Intracellular iron chaperone frataxin">
    <location>
        <begin position="1"/>
        <end position="123"/>
    </location>
</feature>
<feature type="helix" evidence="6">
    <location>
        <begin position="1"/>
        <end position="4"/>
    </location>
</feature>
<feature type="helix" evidence="6">
    <location>
        <begin position="5"/>
        <end position="9"/>
    </location>
</feature>
<feature type="helix" evidence="6">
    <location>
        <begin position="14"/>
        <end position="30"/>
    </location>
</feature>
<feature type="strand" evidence="6">
    <location>
        <begin position="34"/>
        <end position="39"/>
    </location>
</feature>
<feature type="strand" evidence="6">
    <location>
        <begin position="42"/>
        <end position="47"/>
    </location>
</feature>
<feature type="strand" evidence="6">
    <location>
        <begin position="50"/>
        <end position="57"/>
    </location>
</feature>
<feature type="strand" evidence="6">
    <location>
        <begin position="59"/>
        <end position="65"/>
    </location>
</feature>
<feature type="helix" evidence="6">
    <location>
        <begin position="68"/>
        <end position="73"/>
    </location>
</feature>
<feature type="helix" evidence="6">
    <location>
        <begin position="75"/>
        <end position="81"/>
    </location>
</feature>
<feature type="strand" evidence="6">
    <location>
        <begin position="90"/>
        <end position="93"/>
    </location>
</feature>
<feature type="helix" evidence="6">
    <location>
        <begin position="100"/>
        <end position="113"/>
    </location>
</feature>
<feature type="turn" evidence="6">
    <location>
        <begin position="114"/>
        <end position="116"/>
    </location>
</feature>
<feature type="strand" evidence="6">
    <location>
        <begin position="119"/>
        <end position="121"/>
    </location>
</feature>